<feature type="chain" id="PRO_1000139568" description="CTP synthase">
    <location>
        <begin position="1"/>
        <end position="545"/>
    </location>
</feature>
<feature type="domain" description="Glutamine amidotransferase type-1" evidence="1">
    <location>
        <begin position="291"/>
        <end position="542"/>
    </location>
</feature>
<feature type="region of interest" description="Amidoligase domain" evidence="1">
    <location>
        <begin position="1"/>
        <end position="266"/>
    </location>
</feature>
<feature type="active site" description="Nucleophile; for glutamine hydrolysis" evidence="1">
    <location>
        <position position="379"/>
    </location>
</feature>
<feature type="active site" evidence="1">
    <location>
        <position position="515"/>
    </location>
</feature>
<feature type="active site" evidence="1">
    <location>
        <position position="517"/>
    </location>
</feature>
<feature type="binding site" evidence="1">
    <location>
        <position position="14"/>
    </location>
    <ligand>
        <name>CTP</name>
        <dbReference type="ChEBI" id="CHEBI:37563"/>
        <note>allosteric inhibitor</note>
    </ligand>
</feature>
<feature type="binding site" evidence="1">
    <location>
        <position position="14"/>
    </location>
    <ligand>
        <name>UTP</name>
        <dbReference type="ChEBI" id="CHEBI:46398"/>
    </ligand>
</feature>
<feature type="binding site" evidence="1">
    <location>
        <begin position="15"/>
        <end position="20"/>
    </location>
    <ligand>
        <name>ATP</name>
        <dbReference type="ChEBI" id="CHEBI:30616"/>
    </ligand>
</feature>
<feature type="binding site" evidence="1">
    <location>
        <position position="72"/>
    </location>
    <ligand>
        <name>ATP</name>
        <dbReference type="ChEBI" id="CHEBI:30616"/>
    </ligand>
</feature>
<feature type="binding site" evidence="1">
    <location>
        <position position="72"/>
    </location>
    <ligand>
        <name>Mg(2+)</name>
        <dbReference type="ChEBI" id="CHEBI:18420"/>
    </ligand>
</feature>
<feature type="binding site" evidence="1">
    <location>
        <position position="140"/>
    </location>
    <ligand>
        <name>Mg(2+)</name>
        <dbReference type="ChEBI" id="CHEBI:18420"/>
    </ligand>
</feature>
<feature type="binding site" evidence="1">
    <location>
        <begin position="147"/>
        <end position="149"/>
    </location>
    <ligand>
        <name>CTP</name>
        <dbReference type="ChEBI" id="CHEBI:37563"/>
        <note>allosteric inhibitor</note>
    </ligand>
</feature>
<feature type="binding site" evidence="1">
    <location>
        <begin position="187"/>
        <end position="192"/>
    </location>
    <ligand>
        <name>CTP</name>
        <dbReference type="ChEBI" id="CHEBI:37563"/>
        <note>allosteric inhibitor</note>
    </ligand>
</feature>
<feature type="binding site" evidence="1">
    <location>
        <begin position="187"/>
        <end position="192"/>
    </location>
    <ligand>
        <name>UTP</name>
        <dbReference type="ChEBI" id="CHEBI:46398"/>
    </ligand>
</feature>
<feature type="binding site" evidence="1">
    <location>
        <position position="223"/>
    </location>
    <ligand>
        <name>CTP</name>
        <dbReference type="ChEBI" id="CHEBI:37563"/>
        <note>allosteric inhibitor</note>
    </ligand>
</feature>
<feature type="binding site" evidence="1">
    <location>
        <position position="223"/>
    </location>
    <ligand>
        <name>UTP</name>
        <dbReference type="ChEBI" id="CHEBI:46398"/>
    </ligand>
</feature>
<feature type="binding site" evidence="1">
    <location>
        <begin position="239"/>
        <end position="241"/>
    </location>
    <ligand>
        <name>ATP</name>
        <dbReference type="ChEBI" id="CHEBI:30616"/>
    </ligand>
</feature>
<feature type="binding site" evidence="1">
    <location>
        <position position="352"/>
    </location>
    <ligand>
        <name>L-glutamine</name>
        <dbReference type="ChEBI" id="CHEBI:58359"/>
    </ligand>
</feature>
<feature type="binding site" evidence="1">
    <location>
        <begin position="380"/>
        <end position="383"/>
    </location>
    <ligand>
        <name>L-glutamine</name>
        <dbReference type="ChEBI" id="CHEBI:58359"/>
    </ligand>
</feature>
<feature type="binding site" evidence="1">
    <location>
        <position position="403"/>
    </location>
    <ligand>
        <name>L-glutamine</name>
        <dbReference type="ChEBI" id="CHEBI:58359"/>
    </ligand>
</feature>
<feature type="binding site" evidence="1">
    <location>
        <position position="470"/>
    </location>
    <ligand>
        <name>L-glutamine</name>
        <dbReference type="ChEBI" id="CHEBI:58359"/>
    </ligand>
</feature>
<reference key="1">
    <citation type="submission" date="2007-02" db="EMBL/GenBank/DDBJ databases">
        <title>Complete sequence of chromosome of Shewanella baltica OS155.</title>
        <authorList>
            <consortium name="US DOE Joint Genome Institute"/>
            <person name="Copeland A."/>
            <person name="Lucas S."/>
            <person name="Lapidus A."/>
            <person name="Barry K."/>
            <person name="Detter J.C."/>
            <person name="Glavina del Rio T."/>
            <person name="Hammon N."/>
            <person name="Israni S."/>
            <person name="Dalin E."/>
            <person name="Tice H."/>
            <person name="Pitluck S."/>
            <person name="Sims D.R."/>
            <person name="Brettin T."/>
            <person name="Bruce D."/>
            <person name="Han C."/>
            <person name="Tapia R."/>
            <person name="Brainard J."/>
            <person name="Schmutz J."/>
            <person name="Larimer F."/>
            <person name="Land M."/>
            <person name="Hauser L."/>
            <person name="Kyrpides N."/>
            <person name="Mikhailova N."/>
            <person name="Brettar I."/>
            <person name="Klappenbach J."/>
            <person name="Konstantinidis K."/>
            <person name="Rodrigues J."/>
            <person name="Tiedje J."/>
            <person name="Richardson P."/>
        </authorList>
    </citation>
    <scope>NUCLEOTIDE SEQUENCE [LARGE SCALE GENOMIC DNA]</scope>
    <source>
        <strain>OS155 / ATCC BAA-1091</strain>
    </source>
</reference>
<evidence type="ECO:0000255" key="1">
    <source>
        <dbReference type="HAMAP-Rule" id="MF_01227"/>
    </source>
</evidence>
<sequence length="545" mass="60109">MTTRYIFVTGGVVSSLGKGIAAASLAAILEARGLNVTIMKLDPYINVDPGTMSPTQHGEVFVTEDGAETDLDLGHYERFIRTKMNRRNNFTTGRIYEEVLRKERRGDYLGATIQVIPHITNAIKEKVLAGGEGHDVAIVEIGGTVGDIESLPFLESIRQLGVELGRDRTLFMHLTLVPFLGAAGEVKTKPTQHSVKELRSIGIAPDVLVCRGDRAIPANEKAKISLFCNVEERAVISLKDVDSIYKIPALLRSQGLDDLVVKRFGLECREADLSEWENVIYQEANPNGEVVIGMVGKYIELPDAYKSVNEALKHAGLKNRVSVTIKYIDSQTVEAKGEEVLQGLDGILVPGGFGERGVEGKILAAKFARENNLPYFGICLGMQVALIEFARNVAGMADAHSTEFNKETPFPVVGLITEWIDEEGNVEQRHEASDLGGTMRLGAQLCHLLDGSKAAQAYKGNSCVERHRHRYEVNNKYRERLEQAGMIFSGLSSDRKLVEMIELKDHPWFVAGQFHPEFTSTPRDGHPLFEGFIAAASAHQKRDLK</sequence>
<keyword id="KW-0067">ATP-binding</keyword>
<keyword id="KW-0315">Glutamine amidotransferase</keyword>
<keyword id="KW-0436">Ligase</keyword>
<keyword id="KW-0460">Magnesium</keyword>
<keyword id="KW-0479">Metal-binding</keyword>
<keyword id="KW-0547">Nucleotide-binding</keyword>
<keyword id="KW-0665">Pyrimidine biosynthesis</keyword>
<keyword id="KW-1185">Reference proteome</keyword>
<gene>
    <name evidence="1" type="primary">pyrG</name>
    <name type="ordered locus">Sbal_3128</name>
</gene>
<protein>
    <recommendedName>
        <fullName evidence="1">CTP synthase</fullName>
        <ecNumber evidence="1">6.3.4.2</ecNumber>
    </recommendedName>
    <alternativeName>
        <fullName evidence="1">Cytidine 5'-triphosphate synthase</fullName>
    </alternativeName>
    <alternativeName>
        <fullName evidence="1">Cytidine triphosphate synthetase</fullName>
        <shortName evidence="1">CTP synthetase</shortName>
        <shortName evidence="1">CTPS</shortName>
    </alternativeName>
    <alternativeName>
        <fullName evidence="1">UTP--ammonia ligase</fullName>
    </alternativeName>
</protein>
<dbReference type="EC" id="6.3.4.2" evidence="1"/>
<dbReference type="EMBL" id="CP000563">
    <property type="protein sequence ID" value="ABN62609.1"/>
    <property type="molecule type" value="Genomic_DNA"/>
</dbReference>
<dbReference type="RefSeq" id="WP_006082617.1">
    <property type="nucleotide sequence ID" value="NC_009052.1"/>
</dbReference>
<dbReference type="SMR" id="A3D796"/>
<dbReference type="STRING" id="325240.Sbal_3128"/>
<dbReference type="KEGG" id="sbl:Sbal_3128"/>
<dbReference type="HOGENOM" id="CLU_011675_5_0_6"/>
<dbReference type="OrthoDB" id="9801107at2"/>
<dbReference type="UniPathway" id="UPA00159">
    <property type="reaction ID" value="UER00277"/>
</dbReference>
<dbReference type="Proteomes" id="UP000001557">
    <property type="component" value="Chromosome"/>
</dbReference>
<dbReference type="GO" id="GO:0005829">
    <property type="term" value="C:cytosol"/>
    <property type="evidence" value="ECO:0007669"/>
    <property type="project" value="TreeGrafter"/>
</dbReference>
<dbReference type="GO" id="GO:0005524">
    <property type="term" value="F:ATP binding"/>
    <property type="evidence" value="ECO:0007669"/>
    <property type="project" value="UniProtKB-KW"/>
</dbReference>
<dbReference type="GO" id="GO:0003883">
    <property type="term" value="F:CTP synthase activity"/>
    <property type="evidence" value="ECO:0007669"/>
    <property type="project" value="UniProtKB-UniRule"/>
</dbReference>
<dbReference type="GO" id="GO:0004359">
    <property type="term" value="F:glutaminase activity"/>
    <property type="evidence" value="ECO:0007669"/>
    <property type="project" value="RHEA"/>
</dbReference>
<dbReference type="GO" id="GO:0042802">
    <property type="term" value="F:identical protein binding"/>
    <property type="evidence" value="ECO:0007669"/>
    <property type="project" value="TreeGrafter"/>
</dbReference>
<dbReference type="GO" id="GO:0046872">
    <property type="term" value="F:metal ion binding"/>
    <property type="evidence" value="ECO:0007669"/>
    <property type="project" value="UniProtKB-KW"/>
</dbReference>
<dbReference type="GO" id="GO:0044210">
    <property type="term" value="P:'de novo' CTP biosynthetic process"/>
    <property type="evidence" value="ECO:0007669"/>
    <property type="project" value="UniProtKB-UniRule"/>
</dbReference>
<dbReference type="GO" id="GO:0019856">
    <property type="term" value="P:pyrimidine nucleobase biosynthetic process"/>
    <property type="evidence" value="ECO:0007669"/>
    <property type="project" value="TreeGrafter"/>
</dbReference>
<dbReference type="CDD" id="cd03113">
    <property type="entry name" value="CTPS_N"/>
    <property type="match status" value="1"/>
</dbReference>
<dbReference type="CDD" id="cd01746">
    <property type="entry name" value="GATase1_CTP_Synthase"/>
    <property type="match status" value="1"/>
</dbReference>
<dbReference type="FunFam" id="3.40.50.300:FF:000009">
    <property type="entry name" value="CTP synthase"/>
    <property type="match status" value="1"/>
</dbReference>
<dbReference type="FunFam" id="3.40.50.880:FF:000002">
    <property type="entry name" value="CTP synthase"/>
    <property type="match status" value="1"/>
</dbReference>
<dbReference type="Gene3D" id="3.40.50.880">
    <property type="match status" value="1"/>
</dbReference>
<dbReference type="Gene3D" id="3.40.50.300">
    <property type="entry name" value="P-loop containing nucleotide triphosphate hydrolases"/>
    <property type="match status" value="1"/>
</dbReference>
<dbReference type="HAMAP" id="MF_01227">
    <property type="entry name" value="PyrG"/>
    <property type="match status" value="1"/>
</dbReference>
<dbReference type="InterPro" id="IPR029062">
    <property type="entry name" value="Class_I_gatase-like"/>
</dbReference>
<dbReference type="InterPro" id="IPR004468">
    <property type="entry name" value="CTP_synthase"/>
</dbReference>
<dbReference type="InterPro" id="IPR017456">
    <property type="entry name" value="CTP_synthase_N"/>
</dbReference>
<dbReference type="InterPro" id="IPR017926">
    <property type="entry name" value="GATASE"/>
</dbReference>
<dbReference type="InterPro" id="IPR033828">
    <property type="entry name" value="GATase1_CTP_Synthase"/>
</dbReference>
<dbReference type="InterPro" id="IPR027417">
    <property type="entry name" value="P-loop_NTPase"/>
</dbReference>
<dbReference type="NCBIfam" id="NF003792">
    <property type="entry name" value="PRK05380.1"/>
    <property type="match status" value="1"/>
</dbReference>
<dbReference type="NCBIfam" id="TIGR00337">
    <property type="entry name" value="PyrG"/>
    <property type="match status" value="1"/>
</dbReference>
<dbReference type="PANTHER" id="PTHR11550">
    <property type="entry name" value="CTP SYNTHASE"/>
    <property type="match status" value="1"/>
</dbReference>
<dbReference type="PANTHER" id="PTHR11550:SF0">
    <property type="entry name" value="CTP SYNTHASE-RELATED"/>
    <property type="match status" value="1"/>
</dbReference>
<dbReference type="Pfam" id="PF06418">
    <property type="entry name" value="CTP_synth_N"/>
    <property type="match status" value="1"/>
</dbReference>
<dbReference type="Pfam" id="PF00117">
    <property type="entry name" value="GATase"/>
    <property type="match status" value="1"/>
</dbReference>
<dbReference type="SUPFAM" id="SSF52317">
    <property type="entry name" value="Class I glutamine amidotransferase-like"/>
    <property type="match status" value="1"/>
</dbReference>
<dbReference type="SUPFAM" id="SSF52540">
    <property type="entry name" value="P-loop containing nucleoside triphosphate hydrolases"/>
    <property type="match status" value="1"/>
</dbReference>
<dbReference type="PROSITE" id="PS51273">
    <property type="entry name" value="GATASE_TYPE_1"/>
    <property type="match status" value="1"/>
</dbReference>
<organism>
    <name type="scientific">Shewanella baltica (strain OS155 / ATCC BAA-1091)</name>
    <dbReference type="NCBI Taxonomy" id="325240"/>
    <lineage>
        <taxon>Bacteria</taxon>
        <taxon>Pseudomonadati</taxon>
        <taxon>Pseudomonadota</taxon>
        <taxon>Gammaproteobacteria</taxon>
        <taxon>Alteromonadales</taxon>
        <taxon>Shewanellaceae</taxon>
        <taxon>Shewanella</taxon>
    </lineage>
</organism>
<name>PYRG_SHEB5</name>
<comment type="function">
    <text evidence="1">Catalyzes the ATP-dependent amination of UTP to CTP with either L-glutamine or ammonia as the source of nitrogen. Regulates intracellular CTP levels through interactions with the four ribonucleotide triphosphates.</text>
</comment>
<comment type="catalytic activity">
    <reaction evidence="1">
        <text>UTP + L-glutamine + ATP + H2O = CTP + L-glutamate + ADP + phosphate + 2 H(+)</text>
        <dbReference type="Rhea" id="RHEA:26426"/>
        <dbReference type="ChEBI" id="CHEBI:15377"/>
        <dbReference type="ChEBI" id="CHEBI:15378"/>
        <dbReference type="ChEBI" id="CHEBI:29985"/>
        <dbReference type="ChEBI" id="CHEBI:30616"/>
        <dbReference type="ChEBI" id="CHEBI:37563"/>
        <dbReference type="ChEBI" id="CHEBI:43474"/>
        <dbReference type="ChEBI" id="CHEBI:46398"/>
        <dbReference type="ChEBI" id="CHEBI:58359"/>
        <dbReference type="ChEBI" id="CHEBI:456216"/>
        <dbReference type="EC" id="6.3.4.2"/>
    </reaction>
</comment>
<comment type="catalytic activity">
    <reaction evidence="1">
        <text>L-glutamine + H2O = L-glutamate + NH4(+)</text>
        <dbReference type="Rhea" id="RHEA:15889"/>
        <dbReference type="ChEBI" id="CHEBI:15377"/>
        <dbReference type="ChEBI" id="CHEBI:28938"/>
        <dbReference type="ChEBI" id="CHEBI:29985"/>
        <dbReference type="ChEBI" id="CHEBI:58359"/>
    </reaction>
</comment>
<comment type="catalytic activity">
    <reaction evidence="1">
        <text>UTP + NH4(+) + ATP = CTP + ADP + phosphate + 2 H(+)</text>
        <dbReference type="Rhea" id="RHEA:16597"/>
        <dbReference type="ChEBI" id="CHEBI:15378"/>
        <dbReference type="ChEBI" id="CHEBI:28938"/>
        <dbReference type="ChEBI" id="CHEBI:30616"/>
        <dbReference type="ChEBI" id="CHEBI:37563"/>
        <dbReference type="ChEBI" id="CHEBI:43474"/>
        <dbReference type="ChEBI" id="CHEBI:46398"/>
        <dbReference type="ChEBI" id="CHEBI:456216"/>
    </reaction>
</comment>
<comment type="activity regulation">
    <text evidence="1">Allosterically activated by GTP, when glutamine is the substrate; GTP has no effect on the reaction when ammonia is the substrate. The allosteric effector GTP functions by stabilizing the protein conformation that binds the tetrahedral intermediate(s) formed during glutamine hydrolysis. Inhibited by the product CTP, via allosteric rather than competitive inhibition.</text>
</comment>
<comment type="pathway">
    <text evidence="1">Pyrimidine metabolism; CTP biosynthesis via de novo pathway; CTP from UDP: step 2/2.</text>
</comment>
<comment type="subunit">
    <text evidence="1">Homotetramer.</text>
</comment>
<comment type="miscellaneous">
    <text evidence="1">CTPSs have evolved a hybrid strategy for distinguishing between UTP and CTP. The overlapping regions of the product feedback inhibitory and substrate sites recognize a common feature in both compounds, the triphosphate moiety. To differentiate isosteric substrate and product pyrimidine rings, an additional pocket far from the expected kinase/ligase catalytic site, specifically recognizes the cytosine and ribose portions of the product inhibitor.</text>
</comment>
<comment type="similarity">
    <text evidence="1">Belongs to the CTP synthase family.</text>
</comment>
<proteinExistence type="inferred from homology"/>
<accession>A3D796</accession>